<reference key="1">
    <citation type="journal article" date="2002" name="Nature">
        <title>The genome sequence of Schizosaccharomyces pombe.</title>
        <authorList>
            <person name="Wood V."/>
            <person name="Gwilliam R."/>
            <person name="Rajandream M.A."/>
            <person name="Lyne M.H."/>
            <person name="Lyne R."/>
            <person name="Stewart A."/>
            <person name="Sgouros J.G."/>
            <person name="Peat N."/>
            <person name="Hayles J."/>
            <person name="Baker S.G."/>
            <person name="Basham D."/>
            <person name="Bowman S."/>
            <person name="Brooks K."/>
            <person name="Brown D."/>
            <person name="Brown S."/>
            <person name="Chillingworth T."/>
            <person name="Churcher C.M."/>
            <person name="Collins M."/>
            <person name="Connor R."/>
            <person name="Cronin A."/>
            <person name="Davis P."/>
            <person name="Feltwell T."/>
            <person name="Fraser A."/>
            <person name="Gentles S."/>
            <person name="Goble A."/>
            <person name="Hamlin N."/>
            <person name="Harris D.E."/>
            <person name="Hidalgo J."/>
            <person name="Hodgson G."/>
            <person name="Holroyd S."/>
            <person name="Hornsby T."/>
            <person name="Howarth S."/>
            <person name="Huckle E.J."/>
            <person name="Hunt S."/>
            <person name="Jagels K."/>
            <person name="James K.D."/>
            <person name="Jones L."/>
            <person name="Jones M."/>
            <person name="Leather S."/>
            <person name="McDonald S."/>
            <person name="McLean J."/>
            <person name="Mooney P."/>
            <person name="Moule S."/>
            <person name="Mungall K.L."/>
            <person name="Murphy L.D."/>
            <person name="Niblett D."/>
            <person name="Odell C."/>
            <person name="Oliver K."/>
            <person name="O'Neil S."/>
            <person name="Pearson D."/>
            <person name="Quail M.A."/>
            <person name="Rabbinowitsch E."/>
            <person name="Rutherford K.M."/>
            <person name="Rutter S."/>
            <person name="Saunders D."/>
            <person name="Seeger K."/>
            <person name="Sharp S."/>
            <person name="Skelton J."/>
            <person name="Simmonds M.N."/>
            <person name="Squares R."/>
            <person name="Squares S."/>
            <person name="Stevens K."/>
            <person name="Taylor K."/>
            <person name="Taylor R.G."/>
            <person name="Tivey A."/>
            <person name="Walsh S.V."/>
            <person name="Warren T."/>
            <person name="Whitehead S."/>
            <person name="Woodward J.R."/>
            <person name="Volckaert G."/>
            <person name="Aert R."/>
            <person name="Robben J."/>
            <person name="Grymonprez B."/>
            <person name="Weltjens I."/>
            <person name="Vanstreels E."/>
            <person name="Rieger M."/>
            <person name="Schaefer M."/>
            <person name="Mueller-Auer S."/>
            <person name="Gabel C."/>
            <person name="Fuchs M."/>
            <person name="Duesterhoeft A."/>
            <person name="Fritzc C."/>
            <person name="Holzer E."/>
            <person name="Moestl D."/>
            <person name="Hilbert H."/>
            <person name="Borzym K."/>
            <person name="Langer I."/>
            <person name="Beck A."/>
            <person name="Lehrach H."/>
            <person name="Reinhardt R."/>
            <person name="Pohl T.M."/>
            <person name="Eger P."/>
            <person name="Zimmermann W."/>
            <person name="Wedler H."/>
            <person name="Wambutt R."/>
            <person name="Purnelle B."/>
            <person name="Goffeau A."/>
            <person name="Cadieu E."/>
            <person name="Dreano S."/>
            <person name="Gloux S."/>
            <person name="Lelaure V."/>
            <person name="Mottier S."/>
            <person name="Galibert F."/>
            <person name="Aves S.J."/>
            <person name="Xiang Z."/>
            <person name="Hunt C."/>
            <person name="Moore K."/>
            <person name="Hurst S.M."/>
            <person name="Lucas M."/>
            <person name="Rochet M."/>
            <person name="Gaillardin C."/>
            <person name="Tallada V.A."/>
            <person name="Garzon A."/>
            <person name="Thode G."/>
            <person name="Daga R.R."/>
            <person name="Cruzado L."/>
            <person name="Jimenez J."/>
            <person name="Sanchez M."/>
            <person name="del Rey F."/>
            <person name="Benito J."/>
            <person name="Dominguez A."/>
            <person name="Revuelta J.L."/>
            <person name="Moreno S."/>
            <person name="Armstrong J."/>
            <person name="Forsburg S.L."/>
            <person name="Cerutti L."/>
            <person name="Lowe T."/>
            <person name="McCombie W.R."/>
            <person name="Paulsen I."/>
            <person name="Potashkin J."/>
            <person name="Shpakovski G.V."/>
            <person name="Ussery D."/>
            <person name="Barrell B.G."/>
            <person name="Nurse P."/>
        </authorList>
    </citation>
    <scope>NUCLEOTIDE SEQUENCE [LARGE SCALE GENOMIC DNA]</scope>
    <source>
        <strain>972 / ATCC 24843</strain>
    </source>
</reference>
<reference key="2">
    <citation type="journal article" date="2011" name="Science">
        <title>Comparative functional genomics of the fission yeasts.</title>
        <authorList>
            <person name="Rhind N."/>
            <person name="Chen Z."/>
            <person name="Yassour M."/>
            <person name="Thompson D.A."/>
            <person name="Haas B.J."/>
            <person name="Habib N."/>
            <person name="Wapinski I."/>
            <person name="Roy S."/>
            <person name="Lin M.F."/>
            <person name="Heiman D.I."/>
            <person name="Young S.K."/>
            <person name="Furuya K."/>
            <person name="Guo Y."/>
            <person name="Pidoux A."/>
            <person name="Chen H.M."/>
            <person name="Robbertse B."/>
            <person name="Goldberg J.M."/>
            <person name="Aoki K."/>
            <person name="Bayne E.H."/>
            <person name="Berlin A.M."/>
            <person name="Desjardins C.A."/>
            <person name="Dobbs E."/>
            <person name="Dukaj L."/>
            <person name="Fan L."/>
            <person name="FitzGerald M.G."/>
            <person name="French C."/>
            <person name="Gujja S."/>
            <person name="Hansen K."/>
            <person name="Keifenheim D."/>
            <person name="Levin J.Z."/>
            <person name="Mosher R.A."/>
            <person name="Mueller C.A."/>
            <person name="Pfiffner J."/>
            <person name="Priest M."/>
            <person name="Russ C."/>
            <person name="Smialowska A."/>
            <person name="Swoboda P."/>
            <person name="Sykes S.M."/>
            <person name="Vaughn M."/>
            <person name="Vengrova S."/>
            <person name="Yoder R."/>
            <person name="Zeng Q."/>
            <person name="Allshire R."/>
            <person name="Baulcombe D."/>
            <person name="Birren B.W."/>
            <person name="Brown W."/>
            <person name="Ekwall K."/>
            <person name="Kellis M."/>
            <person name="Leatherwood J."/>
            <person name="Levin H."/>
            <person name="Margalit H."/>
            <person name="Martienssen R."/>
            <person name="Nieduszynski C.A."/>
            <person name="Spatafora J.W."/>
            <person name="Friedman N."/>
            <person name="Dalgaard J.Z."/>
            <person name="Baumann P."/>
            <person name="Niki H."/>
            <person name="Regev A."/>
            <person name="Nusbaum C."/>
        </authorList>
    </citation>
    <scope>REVISION OF GENE MODEL</scope>
</reference>
<reference key="3">
    <citation type="journal article" date="2006" name="Nat. Biotechnol.">
        <title>ORFeome cloning and global analysis of protein localization in the fission yeast Schizosaccharomyces pombe.</title>
        <authorList>
            <person name="Matsuyama A."/>
            <person name="Arai R."/>
            <person name="Yashiroda Y."/>
            <person name="Shirai A."/>
            <person name="Kamata A."/>
            <person name="Sekido S."/>
            <person name="Kobayashi Y."/>
            <person name="Hashimoto A."/>
            <person name="Hamamoto M."/>
            <person name="Hiraoka Y."/>
            <person name="Horinouchi S."/>
            <person name="Yoshida M."/>
        </authorList>
    </citation>
    <scope>SUBCELLULAR LOCATION [LARGE SCALE ANALYSIS]</scope>
</reference>
<reference key="4">
    <citation type="journal article" date="2009" name="FEMS Yeast Res.">
        <title>Identification and characterization of a gene required for alpha1,2-mannose extension in the O-linked glycan synthesis pathway in Schizosaccharomyces pombe.</title>
        <authorList>
            <person name="Ikeda Y."/>
            <person name="Ohashi T."/>
            <person name="Tanaka N."/>
            <person name="Takegawa K."/>
        </authorList>
    </citation>
    <scope>IDENTIFICATION</scope>
</reference>
<evidence type="ECO:0000250" key="1"/>
<evidence type="ECO:0000255" key="2"/>
<evidence type="ECO:0000269" key="3">
    <source>
    </source>
</evidence>
<evidence type="ECO:0000305" key="4"/>
<accession>O94565</accession>
<protein>
    <recommendedName>
        <fullName>O-glycoside alpha-1,2-mannosyltransferase homolog 4</fullName>
        <ecNumber>2.4.1.-</ecNumber>
    </recommendedName>
</protein>
<gene>
    <name type="primary">omh4</name>
    <name type="ORF">SPBC1773.08c</name>
</gene>
<name>OMH4_SCHPO</name>
<comment type="function">
    <text evidence="1">Probable mannosyltransferase involved in O-glycosylation of cell wall and secreted proteins. Transfers an alpha-D-mannosyl residue from GDP-mannose into lipid-linked oligosaccharide, forming an alpha-(1-&gt;2)-D-mannosyl-D-mannose linkage.</text>
</comment>
<comment type="subcellular location">
    <subcellularLocation>
        <location evidence="3">Cytoplasm</location>
    </subcellularLocation>
    <subcellularLocation>
        <location evidence="3">Nucleus</location>
    </subcellularLocation>
    <subcellularLocation>
        <location evidence="4">Golgi apparatus membrane</location>
        <topology evidence="4">Single-pass type II membrane protein</topology>
    </subcellularLocation>
</comment>
<comment type="similarity">
    <text evidence="4">Belongs to the glycosyltransferase 15 family.</text>
</comment>
<proteinExistence type="inferred from homology"/>
<sequence length="440" mass="51375">MLGWNKHVFFSESRINFRCLLRKKLKKRCPLSARFVLVLLLIVLIFILKMGYKQLIYKLNHPPLRRIDERNDPLFSNGCKNVHLEAQLHPRMNATFVMLARNSDLPGVVSSINSLEKHFNRHFNYPYTFLNDEPFDEKFKETILKLTSANVEFGTLEKDTFGFPGNVDVDAAREAIASQGDRGIMYGDTESYHHMCRFFSGFFYKHPLLLKYQWYWRVEPDVAFTCDISYDPFYYMEENGKIYGYVVALKELEDTVPNLFRYTSAYRRNNNLTSNMWKFFLDAPKKENYDISRKDPTVGLSFSSHLNAMIDSSYSAETSSMEGESYNMCHFWSNFEIANFKFFRNEQYENFFRTMDATGGFWTERWGDAPFHSLAAGLFLSKEQVHYFRDLGYRHSDIHHCGQSLGCNCECIPELSEIESTSGGCVTQWVNLIGDGFLDE</sequence>
<dbReference type="EC" id="2.4.1.-"/>
<dbReference type="EMBL" id="CU329671">
    <property type="protein sequence ID" value="CAA21913.2"/>
    <property type="molecule type" value="Genomic_DNA"/>
</dbReference>
<dbReference type="PIR" id="T39673">
    <property type="entry name" value="T39673"/>
</dbReference>
<dbReference type="RefSeq" id="NP_595123.2">
    <property type="nucleotide sequence ID" value="NM_001021030.2"/>
</dbReference>
<dbReference type="SMR" id="O94565"/>
<dbReference type="BioGRID" id="276712">
    <property type="interactions" value="2"/>
</dbReference>
<dbReference type="FunCoup" id="O94565">
    <property type="interactions" value="93"/>
</dbReference>
<dbReference type="CAZy" id="GT15">
    <property type="family name" value="Glycosyltransferase Family 15"/>
</dbReference>
<dbReference type="PaxDb" id="4896-SPBC1773.08c.1"/>
<dbReference type="EnsemblFungi" id="SPBC1773.08c.1">
    <property type="protein sequence ID" value="SPBC1773.08c.1:pep"/>
    <property type="gene ID" value="SPBC1773.08c"/>
</dbReference>
<dbReference type="GeneID" id="2540179"/>
<dbReference type="KEGG" id="spo:2540179"/>
<dbReference type="PomBase" id="SPBC1773.08c">
    <property type="gene designation" value="omh4"/>
</dbReference>
<dbReference type="VEuPathDB" id="FungiDB:SPBC1773.08c"/>
<dbReference type="eggNOG" id="KOG4472">
    <property type="taxonomic scope" value="Eukaryota"/>
</dbReference>
<dbReference type="HOGENOM" id="CLU_024327_2_1_1"/>
<dbReference type="InParanoid" id="O94565"/>
<dbReference type="OMA" id="YNDFFEM"/>
<dbReference type="PRO" id="PR:O94565"/>
<dbReference type="Proteomes" id="UP000002485">
    <property type="component" value="Chromosome II"/>
</dbReference>
<dbReference type="GO" id="GO:0005794">
    <property type="term" value="C:Golgi apparatus"/>
    <property type="evidence" value="ECO:0000318"/>
    <property type="project" value="GO_Central"/>
</dbReference>
<dbReference type="GO" id="GO:0000139">
    <property type="term" value="C:Golgi membrane"/>
    <property type="evidence" value="ECO:0000250"/>
    <property type="project" value="PomBase"/>
</dbReference>
<dbReference type="GO" id="GO:0005634">
    <property type="term" value="C:nucleus"/>
    <property type="evidence" value="ECO:0007669"/>
    <property type="project" value="UniProtKB-SubCell"/>
</dbReference>
<dbReference type="GO" id="GO:0000026">
    <property type="term" value="F:alpha-1,2-mannosyltransferase activity"/>
    <property type="evidence" value="ECO:0000318"/>
    <property type="project" value="GO_Central"/>
</dbReference>
<dbReference type="GO" id="GO:0000032">
    <property type="term" value="P:cell wall mannoprotein biosynthetic process"/>
    <property type="evidence" value="ECO:0000318"/>
    <property type="project" value="GO_Central"/>
</dbReference>
<dbReference type="GO" id="GO:0006487">
    <property type="term" value="P:protein N-linked glycosylation"/>
    <property type="evidence" value="ECO:0000318"/>
    <property type="project" value="GO_Central"/>
</dbReference>
<dbReference type="Gene3D" id="3.90.550.10">
    <property type="entry name" value="Spore Coat Polysaccharide Biosynthesis Protein SpsA, Chain A"/>
    <property type="match status" value="1"/>
</dbReference>
<dbReference type="InterPro" id="IPR002685">
    <property type="entry name" value="Glyco_trans_15"/>
</dbReference>
<dbReference type="InterPro" id="IPR029044">
    <property type="entry name" value="Nucleotide-diphossugar_trans"/>
</dbReference>
<dbReference type="PANTHER" id="PTHR31121">
    <property type="entry name" value="ALPHA-1,2 MANNOSYLTRANSFERASE KTR1"/>
    <property type="match status" value="1"/>
</dbReference>
<dbReference type="PANTHER" id="PTHR31121:SF16">
    <property type="entry name" value="O-GLYCOSIDE ALPHA-1,2-MANNOSYLTRANSFERASE HOMOLOG 4"/>
    <property type="match status" value="1"/>
</dbReference>
<dbReference type="Pfam" id="PF01793">
    <property type="entry name" value="Glyco_transf_15"/>
    <property type="match status" value="1"/>
</dbReference>
<dbReference type="PIRSF" id="PIRSF018153">
    <property type="entry name" value="Glyco_trans_15"/>
    <property type="match status" value="1"/>
</dbReference>
<dbReference type="SUPFAM" id="SSF53448">
    <property type="entry name" value="Nucleotide-diphospho-sugar transferases"/>
    <property type="match status" value="1"/>
</dbReference>
<keyword id="KW-0963">Cytoplasm</keyword>
<keyword id="KW-0328">Glycosyltransferase</keyword>
<keyword id="KW-0333">Golgi apparatus</keyword>
<keyword id="KW-0472">Membrane</keyword>
<keyword id="KW-0539">Nucleus</keyword>
<keyword id="KW-1185">Reference proteome</keyword>
<keyword id="KW-0735">Signal-anchor</keyword>
<keyword id="KW-0808">Transferase</keyword>
<keyword id="KW-0812">Transmembrane</keyword>
<keyword id="KW-1133">Transmembrane helix</keyword>
<feature type="chain" id="PRO_0000316586" description="O-glycoside alpha-1,2-mannosyltransferase homolog 4">
    <location>
        <begin position="1"/>
        <end position="440"/>
    </location>
</feature>
<feature type="topological domain" description="Cytoplasmic" evidence="2">
    <location>
        <begin position="1"/>
        <end position="35"/>
    </location>
</feature>
<feature type="transmembrane region" description="Helical; Signal-anchor for type II membrane protein" evidence="2">
    <location>
        <begin position="36"/>
        <end position="56"/>
    </location>
</feature>
<feature type="topological domain" description="Lumenal" evidence="2">
    <location>
        <begin position="57"/>
        <end position="440"/>
    </location>
</feature>
<feature type="active site" description="Nucleophile" evidence="2">
    <location>
        <position position="336"/>
    </location>
</feature>
<organism>
    <name type="scientific">Schizosaccharomyces pombe (strain 972 / ATCC 24843)</name>
    <name type="common">Fission yeast</name>
    <dbReference type="NCBI Taxonomy" id="284812"/>
    <lineage>
        <taxon>Eukaryota</taxon>
        <taxon>Fungi</taxon>
        <taxon>Dikarya</taxon>
        <taxon>Ascomycota</taxon>
        <taxon>Taphrinomycotina</taxon>
        <taxon>Schizosaccharomycetes</taxon>
        <taxon>Schizosaccharomycetales</taxon>
        <taxon>Schizosaccharomycetaceae</taxon>
        <taxon>Schizosaccharomyces</taxon>
    </lineage>
</organism>